<geneLocation type="chloroplast"/>
<comment type="function">
    <text evidence="1">Probably a ribosomal protein or a ribosome-associated protein.</text>
</comment>
<comment type="subunit">
    <text evidence="1">Part of the 30S ribosomal subunit.</text>
</comment>
<comment type="subcellular location">
    <subcellularLocation>
        <location>Plastid</location>
        <location>Chloroplast</location>
    </subcellularLocation>
</comment>
<comment type="similarity">
    <text evidence="3">Belongs to the chloroplast-specific ribosomal protein cS23 family.</text>
</comment>
<keyword id="KW-0150">Chloroplast</keyword>
<keyword id="KW-0934">Plastid</keyword>
<keyword id="KW-0687">Ribonucleoprotein</keyword>
<keyword id="KW-0689">Ribosomal protein</keyword>
<evidence type="ECO:0000250" key="1"/>
<evidence type="ECO:0000255" key="2">
    <source>
        <dbReference type="HAMAP-Rule" id="MF_00619"/>
    </source>
</evidence>
<evidence type="ECO:0000305" key="3"/>
<sequence length="99" mass="11645">MPKFTLKVLWLDNNVAVAVDQIIGNGTSPLTCYFFWPRNDAWEQVKAELESKPWIEEKERIELLNKTTELINCWQEQSKKYSFKEIQSKFPDFIFAGAN</sequence>
<organism>
    <name type="scientific">Guillardia theta</name>
    <name type="common">Cryptophyte</name>
    <name type="synonym">Cryptomonas phi</name>
    <dbReference type="NCBI Taxonomy" id="55529"/>
    <lineage>
        <taxon>Eukaryota</taxon>
        <taxon>Cryptophyceae</taxon>
        <taxon>Pyrenomonadales</taxon>
        <taxon>Geminigeraceae</taxon>
        <taxon>Guillardia</taxon>
    </lineage>
</organism>
<proteinExistence type="inferred from homology"/>
<dbReference type="EMBL" id="AF041468">
    <property type="protein sequence ID" value="AAC35607.1"/>
    <property type="molecule type" value="Genomic_DNA"/>
</dbReference>
<dbReference type="RefSeq" id="NP_050673.1">
    <property type="nucleotide sequence ID" value="NC_000926.1"/>
</dbReference>
<dbReference type="SMR" id="O78422"/>
<dbReference type="GeneID" id="1444456"/>
<dbReference type="HOGENOM" id="CLU_132693_1_0_1"/>
<dbReference type="OMA" id="TEHTQPK"/>
<dbReference type="GO" id="GO:0009507">
    <property type="term" value="C:chloroplast"/>
    <property type="evidence" value="ECO:0007669"/>
    <property type="project" value="UniProtKB-SubCell"/>
</dbReference>
<dbReference type="GO" id="GO:1990904">
    <property type="term" value="C:ribonucleoprotein complex"/>
    <property type="evidence" value="ECO:0007669"/>
    <property type="project" value="UniProtKB-KW"/>
</dbReference>
<dbReference type="GO" id="GO:0005840">
    <property type="term" value="C:ribosome"/>
    <property type="evidence" value="ECO:0007669"/>
    <property type="project" value="UniProtKB-KW"/>
</dbReference>
<dbReference type="GO" id="GO:0003735">
    <property type="term" value="F:structural constituent of ribosome"/>
    <property type="evidence" value="ECO:0007669"/>
    <property type="project" value="InterPro"/>
</dbReference>
<dbReference type="GO" id="GO:0006412">
    <property type="term" value="P:translation"/>
    <property type="evidence" value="ECO:0007669"/>
    <property type="project" value="UniProtKB-UniRule"/>
</dbReference>
<dbReference type="Gene3D" id="3.30.390.140">
    <property type="match status" value="1"/>
</dbReference>
<dbReference type="HAMAP" id="MF_00619">
    <property type="entry name" value="Ribosomal_plastid_cS23"/>
    <property type="match status" value="1"/>
</dbReference>
<dbReference type="InterPro" id="IPR038447">
    <property type="entry name" value="PSRP-3/Ycf65_sf"/>
</dbReference>
<dbReference type="InterPro" id="IPR006924">
    <property type="entry name" value="Ribosomal_PSRP3/Ycf65"/>
</dbReference>
<dbReference type="NCBIfam" id="NF002740">
    <property type="entry name" value="PRK02724.1"/>
    <property type="match status" value="1"/>
</dbReference>
<dbReference type="PANTHER" id="PTHR35108">
    <property type="entry name" value="30S RIBOSOMAL PROTEIN 3, CHLOROPLASTIC"/>
    <property type="match status" value="1"/>
</dbReference>
<dbReference type="PANTHER" id="PTHR35108:SF1">
    <property type="entry name" value="OS04G0461100 PROTEIN"/>
    <property type="match status" value="1"/>
</dbReference>
<dbReference type="Pfam" id="PF04839">
    <property type="entry name" value="PSRP-3_Ycf65"/>
    <property type="match status" value="1"/>
</dbReference>
<feature type="chain" id="PRO_0000216762" description="Small ribosomal subunit protein cS23">
    <location>
        <begin position="1"/>
        <end position="99"/>
    </location>
</feature>
<reference key="1">
    <citation type="journal article" date="1999" name="J. Mol. Evol.">
        <title>The plastid genome of the cryptophyte alga, Guillardia theta: complete sequence and conserved synteny groups confirm its common ancestry with red algae.</title>
        <authorList>
            <person name="Douglas S.E."/>
            <person name="Penny S.L."/>
        </authorList>
    </citation>
    <scope>NUCLEOTIDE SEQUENCE [LARGE SCALE GENOMIC DNA]</scope>
</reference>
<protein>
    <recommendedName>
        <fullName evidence="2">Small ribosomal subunit protein cS23</fullName>
    </recommendedName>
    <alternativeName>
        <fullName>30S ribosomal protein 3, chloroplastic</fullName>
        <shortName>PSRP-3</shortName>
    </alternativeName>
</protein>
<gene>
    <name type="primary">ycf65</name>
</gene>
<name>RRP3_GUITH</name>
<accession>O78422</accession>